<name>CSPL3_ORYSJ</name>
<accession>Q6Z1G3</accession>
<accession>A0A0P0XIA3</accession>
<dbReference type="EMBL" id="AP004464">
    <property type="protein sequence ID" value="BAD01230.1"/>
    <property type="molecule type" value="Genomic_DNA"/>
</dbReference>
<dbReference type="EMBL" id="AP005439">
    <property type="protein sequence ID" value="BAD13115.1"/>
    <property type="molecule type" value="Genomic_DNA"/>
</dbReference>
<dbReference type="EMBL" id="AP008214">
    <property type="protein sequence ID" value="BAF24276.1"/>
    <property type="molecule type" value="Genomic_DNA"/>
</dbReference>
<dbReference type="EMBL" id="AP014964">
    <property type="protein sequence ID" value="BAT06448.1"/>
    <property type="molecule type" value="Genomic_DNA"/>
</dbReference>
<dbReference type="RefSeq" id="XP_015649826.1">
    <property type="nucleotide sequence ID" value="XM_015794340.1"/>
</dbReference>
<dbReference type="FunCoup" id="Q6Z1G3">
    <property type="interactions" value="506"/>
</dbReference>
<dbReference type="PaxDb" id="39947-Q6Z1G3"/>
<dbReference type="EnsemblPlants" id="Os08t0536200-00">
    <property type="protein sequence ID" value="Os08t0536200-00"/>
    <property type="gene ID" value="Os08g0536200"/>
</dbReference>
<dbReference type="Gramene" id="Os08t0536200-00">
    <property type="protein sequence ID" value="Os08t0536200-00"/>
    <property type="gene ID" value="Os08g0536200"/>
</dbReference>
<dbReference type="KEGG" id="dosa:Os08g0536200"/>
<dbReference type="eggNOG" id="ENOG502R3EV">
    <property type="taxonomic scope" value="Eukaryota"/>
</dbReference>
<dbReference type="HOGENOM" id="CLU_1491594_0_0_1"/>
<dbReference type="InParanoid" id="Q6Z1G3"/>
<dbReference type="OMA" id="GWFAVCR"/>
<dbReference type="OrthoDB" id="677395at2759"/>
<dbReference type="Proteomes" id="UP000000763">
    <property type="component" value="Chromosome 8"/>
</dbReference>
<dbReference type="Proteomes" id="UP000059680">
    <property type="component" value="Chromosome 8"/>
</dbReference>
<dbReference type="GO" id="GO:0005886">
    <property type="term" value="C:plasma membrane"/>
    <property type="evidence" value="ECO:0007669"/>
    <property type="project" value="UniProtKB-SubCell"/>
</dbReference>
<dbReference type="InterPro" id="IPR006459">
    <property type="entry name" value="CASP/CASPL"/>
</dbReference>
<dbReference type="InterPro" id="IPR006702">
    <property type="entry name" value="CASP_dom"/>
</dbReference>
<dbReference type="NCBIfam" id="TIGR01569">
    <property type="entry name" value="A_tha_TIGR01569"/>
    <property type="match status" value="1"/>
</dbReference>
<dbReference type="PANTHER" id="PTHR33573">
    <property type="entry name" value="CASP-LIKE PROTEIN 4A4"/>
    <property type="match status" value="1"/>
</dbReference>
<dbReference type="PANTHER" id="PTHR33573:SF49">
    <property type="entry name" value="CASP-LIKE PROTEIN UU-1"/>
    <property type="match status" value="1"/>
</dbReference>
<dbReference type="Pfam" id="PF04535">
    <property type="entry name" value="CASP_dom"/>
    <property type="match status" value="1"/>
</dbReference>
<keyword id="KW-1003">Cell membrane</keyword>
<keyword id="KW-0472">Membrane</keyword>
<keyword id="KW-1185">Reference proteome</keyword>
<keyword id="KW-0812">Transmembrane</keyword>
<keyword id="KW-1133">Transmembrane helix</keyword>
<evidence type="ECO:0000250" key="1"/>
<evidence type="ECO:0000255" key="2"/>
<evidence type="ECO:0000305" key="3"/>
<protein>
    <recommendedName>
        <fullName>CASP-like protein UU-1</fullName>
        <shortName>OsCASPLUU-1</shortName>
    </recommendedName>
</protein>
<organism>
    <name type="scientific">Oryza sativa subsp. japonica</name>
    <name type="common">Rice</name>
    <dbReference type="NCBI Taxonomy" id="39947"/>
    <lineage>
        <taxon>Eukaryota</taxon>
        <taxon>Viridiplantae</taxon>
        <taxon>Streptophyta</taxon>
        <taxon>Embryophyta</taxon>
        <taxon>Tracheophyta</taxon>
        <taxon>Spermatophyta</taxon>
        <taxon>Magnoliopsida</taxon>
        <taxon>Liliopsida</taxon>
        <taxon>Poales</taxon>
        <taxon>Poaceae</taxon>
        <taxon>BOP clade</taxon>
        <taxon>Oryzoideae</taxon>
        <taxon>Oryzeae</taxon>
        <taxon>Oryzinae</taxon>
        <taxon>Oryza</taxon>
        <taxon>Oryza sativa</taxon>
    </lineage>
</organism>
<reference key="1">
    <citation type="journal article" date="2005" name="Nature">
        <title>The map-based sequence of the rice genome.</title>
        <authorList>
            <consortium name="International rice genome sequencing project (IRGSP)"/>
        </authorList>
    </citation>
    <scope>NUCLEOTIDE SEQUENCE [LARGE SCALE GENOMIC DNA]</scope>
    <source>
        <strain>cv. Nipponbare</strain>
    </source>
</reference>
<reference key="2">
    <citation type="journal article" date="2008" name="Nucleic Acids Res.">
        <title>The rice annotation project database (RAP-DB): 2008 update.</title>
        <authorList>
            <consortium name="The rice annotation project (RAP)"/>
        </authorList>
    </citation>
    <scope>GENOME REANNOTATION</scope>
    <source>
        <strain>cv. Nipponbare</strain>
    </source>
</reference>
<reference key="3">
    <citation type="journal article" date="2013" name="Rice">
        <title>Improvement of the Oryza sativa Nipponbare reference genome using next generation sequence and optical map data.</title>
        <authorList>
            <person name="Kawahara Y."/>
            <person name="de la Bastide M."/>
            <person name="Hamilton J.P."/>
            <person name="Kanamori H."/>
            <person name="McCombie W.R."/>
            <person name="Ouyang S."/>
            <person name="Schwartz D.C."/>
            <person name="Tanaka T."/>
            <person name="Wu J."/>
            <person name="Zhou S."/>
            <person name="Childs K.L."/>
            <person name="Davidson R.M."/>
            <person name="Lin H."/>
            <person name="Quesada-Ocampo L."/>
            <person name="Vaillancourt B."/>
            <person name="Sakai H."/>
            <person name="Lee S.S."/>
            <person name="Kim J."/>
            <person name="Numa H."/>
            <person name="Itoh T."/>
            <person name="Buell C.R."/>
            <person name="Matsumoto T."/>
        </authorList>
    </citation>
    <scope>GENOME REANNOTATION</scope>
    <source>
        <strain>cv. Nipponbare</strain>
    </source>
</reference>
<reference key="4">
    <citation type="journal article" date="2014" name="Plant Physiol.">
        <title>Functional and evolutionary analysis of the CASPARIAN STRIP MEMBRANE DOMAIN PROTEIN family.</title>
        <authorList>
            <person name="Roppolo D."/>
            <person name="Boeckmann B."/>
            <person name="Pfister A."/>
            <person name="Boutet E."/>
            <person name="Rubio M.C."/>
            <person name="Denervaud-Tendon V."/>
            <person name="Vermeer J.E."/>
            <person name="Gheyselinck J."/>
            <person name="Xenarios I."/>
            <person name="Geldner N."/>
        </authorList>
    </citation>
    <scope>GENE FAMILY</scope>
    <scope>NOMENCLATURE</scope>
</reference>
<proteinExistence type="inferred from homology"/>
<feature type="chain" id="PRO_0000391582" description="CASP-like protein UU-1">
    <location>
        <begin position="1"/>
        <end position="168"/>
    </location>
</feature>
<feature type="topological domain" description="Cytoplasmic" evidence="2">
    <location>
        <begin position="1"/>
        <end position="17"/>
    </location>
</feature>
<feature type="transmembrane region" description="Helical" evidence="2">
    <location>
        <begin position="18"/>
        <end position="38"/>
    </location>
</feature>
<feature type="topological domain" description="Extracellular" evidence="2">
    <location>
        <begin position="39"/>
        <end position="54"/>
    </location>
</feature>
<feature type="transmembrane region" description="Helical" evidence="2">
    <location>
        <begin position="55"/>
        <end position="75"/>
    </location>
</feature>
<feature type="topological domain" description="Cytoplasmic" evidence="2">
    <location>
        <begin position="76"/>
        <end position="95"/>
    </location>
</feature>
<feature type="transmembrane region" description="Helical" evidence="2">
    <location>
        <begin position="96"/>
        <end position="116"/>
    </location>
</feature>
<feature type="topological domain" description="Extracellular" evidence="2">
    <location>
        <begin position="117"/>
        <end position="136"/>
    </location>
</feature>
<feature type="transmembrane region" description="Helical" evidence="2">
    <location>
        <begin position="137"/>
        <end position="157"/>
    </location>
</feature>
<feature type="topological domain" description="Cytoplasmic" evidence="2">
    <location>
        <begin position="158"/>
        <end position="168"/>
    </location>
</feature>
<sequence>MVELESQEAVTVASTADIAVDVSLRLLAAATSLAAAVVVAANHQQRWGIRVDFTLFQVWIGFVAVNLVCTVYAAATAAAAARKAMGRWWLHHADAVVVNLEAAATAGAGAIGSIAMWGNEASGWYAVCRLYRRYCNAGAAALALSLAAVLLLGVACARSRYPKMPPTT</sequence>
<gene>
    <name type="ordered locus">Os08g0536200</name>
    <name type="ordered locus">LOC_Os08g42430</name>
    <name type="ORF">OSJNBa0033D24.32</name>
    <name type="ORF">P0665C04.13</name>
</gene>
<comment type="subunit">
    <text evidence="1">Homodimer and heterodimers.</text>
</comment>
<comment type="subcellular location">
    <subcellularLocation>
        <location evidence="1">Cell membrane</location>
        <topology evidence="1">Multi-pass membrane protein</topology>
    </subcellularLocation>
</comment>
<comment type="similarity">
    <text evidence="3">Belongs to the Casparian strip membrane proteins (CASP) family.</text>
</comment>